<keyword id="KW-0025">Alternative splicing</keyword>
<keyword id="KW-0333">Golgi apparatus</keyword>
<keyword id="KW-0378">Hydrolase</keyword>
<keyword id="KW-0472">Membrane</keyword>
<keyword id="KW-1185">Reference proteome</keyword>
<keyword id="KW-0812">Transmembrane</keyword>
<keyword id="KW-1133">Transmembrane helix</keyword>
<evidence type="ECO:0000250" key="1"/>
<evidence type="ECO:0000255" key="2"/>
<evidence type="ECO:0000269" key="3">
    <source>
    </source>
</evidence>
<evidence type="ECO:0000305" key="4"/>
<evidence type="ECO:0000312" key="5">
    <source>
        <dbReference type="WormBase" id="C33H5.14a"/>
    </source>
</evidence>
<evidence type="ECO:0000312" key="6">
    <source>
        <dbReference type="WormBase" id="C33H5.14b"/>
    </source>
</evidence>
<dbReference type="EC" id="3.6.1.15"/>
<dbReference type="EMBL" id="BX284604">
    <property type="protein sequence ID" value="CDM63521.1"/>
    <property type="molecule type" value="Genomic_DNA"/>
</dbReference>
<dbReference type="EMBL" id="BX284604">
    <property type="protein sequence ID" value="CDM63522.1"/>
    <property type="molecule type" value="Genomic_DNA"/>
</dbReference>
<dbReference type="PIR" id="T34147">
    <property type="entry name" value="T34147"/>
</dbReference>
<dbReference type="RefSeq" id="NP_001294166.1">
    <molecule id="Q18411-2"/>
    <property type="nucleotide sequence ID" value="NM_001307237.2"/>
</dbReference>
<dbReference type="RefSeq" id="NP_001294167.1">
    <molecule id="Q18411-1"/>
    <property type="nucleotide sequence ID" value="NM_001307238.2"/>
</dbReference>
<dbReference type="SMR" id="Q18411"/>
<dbReference type="FunCoup" id="Q18411">
    <property type="interactions" value="1561"/>
</dbReference>
<dbReference type="STRING" id="6239.C33H5.14b.1"/>
<dbReference type="PaxDb" id="6239-C33H5.14.1"/>
<dbReference type="EnsemblMetazoa" id="C33H5.14a.1">
    <molecule id="Q18411-2"/>
    <property type="protein sequence ID" value="C33H5.14a.1"/>
    <property type="gene ID" value="WBGene00016380"/>
</dbReference>
<dbReference type="EnsemblMetazoa" id="C33H5.14b.1">
    <molecule id="Q18411-1"/>
    <property type="protein sequence ID" value="C33H5.14b.1"/>
    <property type="gene ID" value="WBGene00016380"/>
</dbReference>
<dbReference type="GeneID" id="177567"/>
<dbReference type="KEGG" id="cel:CELE_C33H5.14"/>
<dbReference type="UCSC" id="C33H5.14.1">
    <molecule id="Q18411-1"/>
    <property type="organism name" value="c. elegans"/>
</dbReference>
<dbReference type="AGR" id="WB:WBGene00016380"/>
<dbReference type="CTD" id="177567"/>
<dbReference type="WormBase" id="C33H5.14a">
    <molecule id="Q18411-2"/>
    <property type="protein sequence ID" value="CE49527"/>
    <property type="gene ID" value="WBGene00016380"/>
    <property type="gene designation" value="ntp-1"/>
</dbReference>
<dbReference type="WormBase" id="C33H5.14b">
    <molecule id="Q18411-1"/>
    <property type="protein sequence ID" value="CE49492"/>
    <property type="gene ID" value="WBGene00016380"/>
    <property type="gene designation" value="ntp-1"/>
</dbReference>
<dbReference type="eggNOG" id="KOG1386">
    <property type="taxonomic scope" value="Eukaryota"/>
</dbReference>
<dbReference type="GeneTree" id="ENSGT01110000267240"/>
<dbReference type="HOGENOM" id="CLU_010246_6_1_1"/>
<dbReference type="InParanoid" id="Q18411"/>
<dbReference type="OMA" id="QYDVMEE"/>
<dbReference type="OrthoDB" id="6372431at2759"/>
<dbReference type="Reactome" id="R-CEL-8850843">
    <property type="pathway name" value="Phosphate bond hydrolysis by NTPDase proteins"/>
</dbReference>
<dbReference type="PRO" id="PR:Q18411"/>
<dbReference type="Proteomes" id="UP000001940">
    <property type="component" value="Chromosome IV"/>
</dbReference>
<dbReference type="Bgee" id="WBGene00016380">
    <property type="expression patterns" value="Expressed in germ line (C elegans) and 4 other cell types or tissues"/>
</dbReference>
<dbReference type="GO" id="GO:0005794">
    <property type="term" value="C:Golgi apparatus"/>
    <property type="evidence" value="ECO:0000314"/>
    <property type="project" value="WormBase"/>
</dbReference>
<dbReference type="GO" id="GO:0000139">
    <property type="term" value="C:Golgi membrane"/>
    <property type="evidence" value="ECO:0007669"/>
    <property type="project" value="UniProtKB-SubCell"/>
</dbReference>
<dbReference type="GO" id="GO:0016020">
    <property type="term" value="C:membrane"/>
    <property type="evidence" value="ECO:0000318"/>
    <property type="project" value="GO_Central"/>
</dbReference>
<dbReference type="GO" id="GO:0048471">
    <property type="term" value="C:perinuclear region of cytoplasm"/>
    <property type="evidence" value="ECO:0000314"/>
    <property type="project" value="WormBase"/>
</dbReference>
<dbReference type="GO" id="GO:0016887">
    <property type="term" value="F:ATP hydrolysis activity"/>
    <property type="evidence" value="ECO:0000314"/>
    <property type="project" value="WormBase"/>
</dbReference>
<dbReference type="GO" id="GO:0043273">
    <property type="term" value="F:CTPase activity"/>
    <property type="evidence" value="ECO:0000314"/>
    <property type="project" value="WormBase"/>
</dbReference>
<dbReference type="GO" id="GO:0004382">
    <property type="term" value="F:GDP phosphatase activity"/>
    <property type="evidence" value="ECO:0000314"/>
    <property type="project" value="WormBase"/>
</dbReference>
<dbReference type="GO" id="GO:0003924">
    <property type="term" value="F:GTPase activity"/>
    <property type="evidence" value="ECO:0000314"/>
    <property type="project" value="WormBase"/>
</dbReference>
<dbReference type="GO" id="GO:0017111">
    <property type="term" value="F:ribonucleoside triphosphate phosphatase activity"/>
    <property type="evidence" value="ECO:0000318"/>
    <property type="project" value="GO_Central"/>
</dbReference>
<dbReference type="GO" id="GO:0045134">
    <property type="term" value="F:UDP phosphatase activity"/>
    <property type="evidence" value="ECO:0000314"/>
    <property type="project" value="WormBase"/>
</dbReference>
<dbReference type="GO" id="GO:0046034">
    <property type="term" value="P:ATP metabolic process"/>
    <property type="evidence" value="ECO:0000314"/>
    <property type="project" value="WormBase"/>
</dbReference>
<dbReference type="GO" id="GO:0046036">
    <property type="term" value="P:CTP metabolic process"/>
    <property type="evidence" value="ECO:0000314"/>
    <property type="project" value="WormBase"/>
</dbReference>
<dbReference type="GO" id="GO:0046710">
    <property type="term" value="P:GDP metabolic process"/>
    <property type="evidence" value="ECO:0000314"/>
    <property type="project" value="WormBase"/>
</dbReference>
<dbReference type="GO" id="GO:0046039">
    <property type="term" value="P:GTP metabolic process"/>
    <property type="evidence" value="ECO:0000314"/>
    <property type="project" value="WormBase"/>
</dbReference>
<dbReference type="GO" id="GO:0006256">
    <property type="term" value="P:UDP catabolic process"/>
    <property type="evidence" value="ECO:0000318"/>
    <property type="project" value="GO_Central"/>
</dbReference>
<dbReference type="GO" id="GO:0046048">
    <property type="term" value="P:UDP metabolic process"/>
    <property type="evidence" value="ECO:0000314"/>
    <property type="project" value="WormBase"/>
</dbReference>
<dbReference type="Gene3D" id="3.30.420.40">
    <property type="match status" value="1"/>
</dbReference>
<dbReference type="Gene3D" id="3.30.420.150">
    <property type="entry name" value="Exopolyphosphatase. Domain 2"/>
    <property type="match status" value="1"/>
</dbReference>
<dbReference type="InterPro" id="IPR000407">
    <property type="entry name" value="GDA1_CD39_NTPase"/>
</dbReference>
<dbReference type="PANTHER" id="PTHR11782">
    <property type="entry name" value="ADENOSINE/GUANOSINE DIPHOSPHATASE"/>
    <property type="match status" value="1"/>
</dbReference>
<dbReference type="PANTHER" id="PTHR11782:SF112">
    <property type="entry name" value="NUCLEOSIDE-TRIPHOSPHATASE NTP-1"/>
    <property type="match status" value="1"/>
</dbReference>
<dbReference type="Pfam" id="PF01150">
    <property type="entry name" value="GDA1_CD39"/>
    <property type="match status" value="1"/>
</dbReference>
<dbReference type="PROSITE" id="PS01238">
    <property type="entry name" value="GDA1_CD39_NTPASE"/>
    <property type="match status" value="1"/>
</dbReference>
<feature type="chain" id="PRO_0000209924" description="Nucleoside-triphosphatase ntp-1">
    <location>
        <begin position="1"/>
        <end position="543"/>
    </location>
</feature>
<feature type="transmembrane region" description="Helical" evidence="2">
    <location>
        <begin position="40"/>
        <end position="60"/>
    </location>
</feature>
<feature type="transmembrane region" description="Helical" evidence="2">
    <location>
        <begin position="497"/>
        <end position="517"/>
    </location>
</feature>
<feature type="active site" description="Proton acceptor" evidence="1">
    <location>
        <position position="212"/>
    </location>
</feature>
<feature type="splice variant" id="VSP_058210" description="In isoform a." evidence="4">
    <location>
        <begin position="1"/>
        <end position="34"/>
    </location>
</feature>
<protein>
    <recommendedName>
        <fullName>Nucleoside-triphosphatase ntp-1</fullName>
        <ecNumber>3.6.1.15</ecNumber>
    </recommendedName>
</protein>
<proteinExistence type="evidence at protein level"/>
<gene>
    <name evidence="6" type="primary">ntp-1</name>
    <name evidence="6" type="ORF">C33H5.14</name>
</gene>
<accession>Q18411</accession>
<accession>W6RRY0</accession>
<accession>W6RTH8</accession>
<name>NTP1_CAEEL</name>
<organism>
    <name type="scientific">Caenorhabditis elegans</name>
    <dbReference type="NCBI Taxonomy" id="6239"/>
    <lineage>
        <taxon>Eukaryota</taxon>
        <taxon>Metazoa</taxon>
        <taxon>Ecdysozoa</taxon>
        <taxon>Nematoda</taxon>
        <taxon>Chromadorea</taxon>
        <taxon>Rhabditida</taxon>
        <taxon>Rhabditina</taxon>
        <taxon>Rhabditomorpha</taxon>
        <taxon>Rhabditoidea</taxon>
        <taxon>Rhabditidae</taxon>
        <taxon>Peloderinae</taxon>
        <taxon>Caenorhabditis</taxon>
    </lineage>
</organism>
<comment type="function">
    <text>Seems to be able to hydrolyze CTP, ATP and UTP.</text>
</comment>
<comment type="catalytic activity">
    <reaction evidence="3">
        <text>a ribonucleoside 5'-triphosphate + H2O = a ribonucleoside 5'-diphosphate + phosphate + H(+)</text>
        <dbReference type="Rhea" id="RHEA:23680"/>
        <dbReference type="ChEBI" id="CHEBI:15377"/>
        <dbReference type="ChEBI" id="CHEBI:15378"/>
        <dbReference type="ChEBI" id="CHEBI:43474"/>
        <dbReference type="ChEBI" id="CHEBI:57930"/>
        <dbReference type="ChEBI" id="CHEBI:61557"/>
        <dbReference type="EC" id="3.6.1.15"/>
    </reaction>
</comment>
<comment type="subcellular location">
    <subcellularLocation>
        <location evidence="4">Golgi apparatus membrane</location>
        <topology evidence="2">Multi-pass membrane protein</topology>
    </subcellularLocation>
</comment>
<comment type="alternative products">
    <event type="alternative splicing"/>
    <isoform>
        <id>Q18411-1</id>
        <name evidence="6">b</name>
        <sequence type="displayed"/>
    </isoform>
    <isoform>
        <id>Q18411-2</id>
        <name evidence="5">a</name>
        <sequence type="described" ref="VSP_058210"/>
    </isoform>
</comment>
<comment type="miscellaneous">
    <text>In contrast to uda-1, expression is not induced by stress.</text>
</comment>
<comment type="similarity">
    <text evidence="4">Belongs to the GDA1/CD39 NTPase family.</text>
</comment>
<sequence length="543" mass="61239">MRWRYTIRDQSPFEESSNCHRLTSSETANTFRWPMRTYNVYGFLLTCTCLLLILTIIPMSGGSSERVQRSVRSVVETKNNIKYGVICDAGSSGTRLFVYTLKPLSGGLTNIDTLIHESEPVVKKVTPGLSSFGDKPEQVVEYLTPLLRFAEEHIPYEQLGETDLLIFATAGMRLLPEAQKDAIIKNLQNGLKSVTALRVSDSNIRIIDGAWEGIYSWIAVNYILGRFDKENDSKVGMIDMGGASVQIAFEIANEKESYNGGNVYEINLGSIETNEDYKYKIYSTTFLGYGANEGLKKYENSLVKSGNSNDSCSPRGLNRLIGEFTVNGTGEWDVCLAQVSSLIGDKAQPSCPNPTCFLRNVIAPSVNLSTVQLYGFSEYWYTTSNFGSGGEYHYQKFTDEVRKYCQKDWNDIQDGFKRNEFPNADIERLGTNCFKAAWVTSVLHDGFNVDKTKHLFQSVLKIAGEEMQWALGAMLYHSKDLKFNLLEQLEVAQSTQQISNFFSFFVILIIVLAVALYRQLQSESTYKKYNFLRTDSKPDFLNV</sequence>
<reference key="1">
    <citation type="journal article" date="1998" name="Science">
        <title>Genome sequence of the nematode C. elegans: a platform for investigating biology.</title>
        <authorList>
            <consortium name="The C. elegans sequencing consortium"/>
        </authorList>
    </citation>
    <scope>NUCLEOTIDE SEQUENCE [LARGE SCALE GENOMIC DNA]</scope>
    <source>
        <strain>Bristol N2</strain>
    </source>
</reference>
<reference key="2">
    <citation type="journal article" date="2004" name="J. Biol. Chem.">
        <title>ire-1-dependent transcriptional up-regulation of a lumenal uridine diphosphatase from Caenorhabditis elegans.</title>
        <authorList>
            <person name="Uccelletti D."/>
            <person name="O'Callaghan C."/>
            <person name="Berninsone P."/>
            <person name="Zemtseva I."/>
            <person name="Abeijon C."/>
            <person name="Hirschberg C.B."/>
        </authorList>
    </citation>
    <scope>CATALYTIC ACTIVITY</scope>
    <scope>SUBCELLULAR LOCATION</scope>
</reference>